<organism>
    <name type="scientific">Alcanivorax borkumensis (strain ATCC 700651 / DSM 11573 / NCIMB 13689 / SK2)</name>
    <dbReference type="NCBI Taxonomy" id="393595"/>
    <lineage>
        <taxon>Bacteria</taxon>
        <taxon>Pseudomonadati</taxon>
        <taxon>Pseudomonadota</taxon>
        <taxon>Gammaproteobacteria</taxon>
        <taxon>Oceanospirillales</taxon>
        <taxon>Alcanivoracaceae</taxon>
        <taxon>Alcanivorax</taxon>
    </lineage>
</organism>
<sequence>MTISSPVIVALDYPDAAQALAMAQQLDPAKVRVKVGKEIFTRSGPAVVDSLHKLGFEVFLDLKFHDIPNTVAGAVAAAADMGVWMVNVHASGGQRMMEGAANAIANHAQRPHLIAVTVLTSMDDSDLQQVGVVDVPKVQVQRLAELAKASGMDGVVCSAQEAGLLKQACGAAFELVTPGIRPQGTAAGDQRRVLTPVQARDAGVDYMVIGRPITQSETPTDVVDTILRSLA</sequence>
<feature type="chain" id="PRO_1000138508" description="Orotidine 5'-phosphate decarboxylase">
    <location>
        <begin position="1"/>
        <end position="231"/>
    </location>
</feature>
<feature type="active site" description="Proton donor" evidence="1">
    <location>
        <position position="63"/>
    </location>
</feature>
<feature type="binding site" evidence="1">
    <location>
        <position position="12"/>
    </location>
    <ligand>
        <name>substrate</name>
    </ligand>
</feature>
<feature type="binding site" evidence="1">
    <location>
        <position position="34"/>
    </location>
    <ligand>
        <name>substrate</name>
    </ligand>
</feature>
<feature type="binding site" evidence="1">
    <location>
        <begin position="61"/>
        <end position="70"/>
    </location>
    <ligand>
        <name>substrate</name>
    </ligand>
</feature>
<feature type="binding site" evidence="1">
    <location>
        <position position="120"/>
    </location>
    <ligand>
        <name>substrate</name>
    </ligand>
</feature>
<feature type="binding site" evidence="1">
    <location>
        <position position="181"/>
    </location>
    <ligand>
        <name>substrate</name>
    </ligand>
</feature>
<feature type="binding site" evidence="1">
    <location>
        <position position="190"/>
    </location>
    <ligand>
        <name>substrate</name>
    </ligand>
</feature>
<feature type="binding site" evidence="1">
    <location>
        <position position="210"/>
    </location>
    <ligand>
        <name>substrate</name>
    </ligand>
</feature>
<feature type="binding site" evidence="1">
    <location>
        <position position="211"/>
    </location>
    <ligand>
        <name>substrate</name>
    </ligand>
</feature>
<keyword id="KW-0210">Decarboxylase</keyword>
<keyword id="KW-0456">Lyase</keyword>
<keyword id="KW-0665">Pyrimidine biosynthesis</keyword>
<keyword id="KW-1185">Reference proteome</keyword>
<reference key="1">
    <citation type="journal article" date="2006" name="Nat. Biotechnol.">
        <title>Genome sequence of the ubiquitous hydrocarbon-degrading marine bacterium Alcanivorax borkumensis.</title>
        <authorList>
            <person name="Schneiker S."/>
            <person name="Martins dos Santos V.A.P."/>
            <person name="Bartels D."/>
            <person name="Bekel T."/>
            <person name="Brecht M."/>
            <person name="Buhrmester J."/>
            <person name="Chernikova T.N."/>
            <person name="Denaro R."/>
            <person name="Ferrer M."/>
            <person name="Gertler C."/>
            <person name="Goesmann A."/>
            <person name="Golyshina O.V."/>
            <person name="Kaminski F."/>
            <person name="Khachane A.N."/>
            <person name="Lang S."/>
            <person name="Linke B."/>
            <person name="McHardy A.C."/>
            <person name="Meyer F."/>
            <person name="Nechitaylo T."/>
            <person name="Puehler A."/>
            <person name="Regenhardt D."/>
            <person name="Rupp O."/>
            <person name="Sabirova J.S."/>
            <person name="Selbitschka W."/>
            <person name="Yakimov M.M."/>
            <person name="Timmis K.N."/>
            <person name="Vorhoelter F.-J."/>
            <person name="Weidner S."/>
            <person name="Kaiser O."/>
            <person name="Golyshin P.N."/>
        </authorList>
    </citation>
    <scope>NUCLEOTIDE SEQUENCE [LARGE SCALE GENOMIC DNA]</scope>
    <source>
        <strain>ATCC 700651 / DSM 11573 / NCIMB 13689 / SK2</strain>
    </source>
</reference>
<protein>
    <recommendedName>
        <fullName evidence="1">Orotidine 5'-phosphate decarboxylase</fullName>
        <ecNumber evidence="1">4.1.1.23</ecNumber>
    </recommendedName>
    <alternativeName>
        <fullName evidence="1">OMP decarboxylase</fullName>
        <shortName evidence="1">OMPDCase</shortName>
        <shortName evidence="1">OMPdecase</shortName>
    </alternativeName>
</protein>
<accession>Q0VNQ9</accession>
<evidence type="ECO:0000255" key="1">
    <source>
        <dbReference type="HAMAP-Rule" id="MF_01200"/>
    </source>
</evidence>
<name>PYRF_ALCBS</name>
<proteinExistence type="inferred from homology"/>
<gene>
    <name evidence="1" type="primary">pyrF</name>
    <name type="ordered locus">ABO_1741</name>
</gene>
<dbReference type="EC" id="4.1.1.23" evidence="1"/>
<dbReference type="EMBL" id="AM286690">
    <property type="protein sequence ID" value="CAL17189.1"/>
    <property type="molecule type" value="Genomic_DNA"/>
</dbReference>
<dbReference type="RefSeq" id="WP_011589022.1">
    <property type="nucleotide sequence ID" value="NC_008260.1"/>
</dbReference>
<dbReference type="SMR" id="Q0VNQ9"/>
<dbReference type="STRING" id="393595.ABO_1741"/>
<dbReference type="KEGG" id="abo:ABO_1741"/>
<dbReference type="eggNOG" id="COG0284">
    <property type="taxonomic scope" value="Bacteria"/>
</dbReference>
<dbReference type="HOGENOM" id="CLU_067069_0_0_6"/>
<dbReference type="OrthoDB" id="9806203at2"/>
<dbReference type="UniPathway" id="UPA00070">
    <property type="reaction ID" value="UER00120"/>
</dbReference>
<dbReference type="Proteomes" id="UP000008871">
    <property type="component" value="Chromosome"/>
</dbReference>
<dbReference type="GO" id="GO:0005829">
    <property type="term" value="C:cytosol"/>
    <property type="evidence" value="ECO:0007669"/>
    <property type="project" value="TreeGrafter"/>
</dbReference>
<dbReference type="GO" id="GO:0004590">
    <property type="term" value="F:orotidine-5'-phosphate decarboxylase activity"/>
    <property type="evidence" value="ECO:0007669"/>
    <property type="project" value="UniProtKB-UniRule"/>
</dbReference>
<dbReference type="GO" id="GO:0006207">
    <property type="term" value="P:'de novo' pyrimidine nucleobase biosynthetic process"/>
    <property type="evidence" value="ECO:0007669"/>
    <property type="project" value="InterPro"/>
</dbReference>
<dbReference type="GO" id="GO:0044205">
    <property type="term" value="P:'de novo' UMP biosynthetic process"/>
    <property type="evidence" value="ECO:0007669"/>
    <property type="project" value="UniProtKB-UniRule"/>
</dbReference>
<dbReference type="CDD" id="cd04725">
    <property type="entry name" value="OMP_decarboxylase_like"/>
    <property type="match status" value="1"/>
</dbReference>
<dbReference type="FunFam" id="3.20.20.70:FF:000015">
    <property type="entry name" value="Orotidine 5'-phosphate decarboxylase"/>
    <property type="match status" value="1"/>
</dbReference>
<dbReference type="Gene3D" id="3.20.20.70">
    <property type="entry name" value="Aldolase class I"/>
    <property type="match status" value="1"/>
</dbReference>
<dbReference type="HAMAP" id="MF_01200_B">
    <property type="entry name" value="OMPdecase_type1_B"/>
    <property type="match status" value="1"/>
</dbReference>
<dbReference type="InterPro" id="IPR013785">
    <property type="entry name" value="Aldolase_TIM"/>
</dbReference>
<dbReference type="InterPro" id="IPR014732">
    <property type="entry name" value="OMPdecase"/>
</dbReference>
<dbReference type="InterPro" id="IPR018089">
    <property type="entry name" value="OMPdecase_AS"/>
</dbReference>
<dbReference type="InterPro" id="IPR047596">
    <property type="entry name" value="OMPdecase_bac"/>
</dbReference>
<dbReference type="InterPro" id="IPR001754">
    <property type="entry name" value="OMPdeCOase_dom"/>
</dbReference>
<dbReference type="InterPro" id="IPR011060">
    <property type="entry name" value="RibuloseP-bd_barrel"/>
</dbReference>
<dbReference type="NCBIfam" id="NF001273">
    <property type="entry name" value="PRK00230.1"/>
    <property type="match status" value="1"/>
</dbReference>
<dbReference type="NCBIfam" id="TIGR01740">
    <property type="entry name" value="pyrF"/>
    <property type="match status" value="1"/>
</dbReference>
<dbReference type="PANTHER" id="PTHR32119">
    <property type="entry name" value="OROTIDINE 5'-PHOSPHATE DECARBOXYLASE"/>
    <property type="match status" value="1"/>
</dbReference>
<dbReference type="PANTHER" id="PTHR32119:SF2">
    <property type="entry name" value="OROTIDINE 5'-PHOSPHATE DECARBOXYLASE"/>
    <property type="match status" value="1"/>
</dbReference>
<dbReference type="Pfam" id="PF00215">
    <property type="entry name" value="OMPdecase"/>
    <property type="match status" value="1"/>
</dbReference>
<dbReference type="SMART" id="SM00934">
    <property type="entry name" value="OMPdecase"/>
    <property type="match status" value="1"/>
</dbReference>
<dbReference type="SUPFAM" id="SSF51366">
    <property type="entry name" value="Ribulose-phoshate binding barrel"/>
    <property type="match status" value="1"/>
</dbReference>
<dbReference type="PROSITE" id="PS00156">
    <property type="entry name" value="OMPDECASE"/>
    <property type="match status" value="1"/>
</dbReference>
<comment type="function">
    <text evidence="1">Catalyzes the decarboxylation of orotidine 5'-monophosphate (OMP) to uridine 5'-monophosphate (UMP).</text>
</comment>
<comment type="catalytic activity">
    <reaction evidence="1">
        <text>orotidine 5'-phosphate + H(+) = UMP + CO2</text>
        <dbReference type="Rhea" id="RHEA:11596"/>
        <dbReference type="ChEBI" id="CHEBI:15378"/>
        <dbReference type="ChEBI" id="CHEBI:16526"/>
        <dbReference type="ChEBI" id="CHEBI:57538"/>
        <dbReference type="ChEBI" id="CHEBI:57865"/>
        <dbReference type="EC" id="4.1.1.23"/>
    </reaction>
</comment>
<comment type="pathway">
    <text evidence="1">Pyrimidine metabolism; UMP biosynthesis via de novo pathway; UMP from orotate: step 2/2.</text>
</comment>
<comment type="subunit">
    <text evidence="1">Homodimer.</text>
</comment>
<comment type="similarity">
    <text evidence="1">Belongs to the OMP decarboxylase family. Type 1 subfamily.</text>
</comment>